<reference key="1">
    <citation type="journal article" date="2010" name="PLoS ONE">
        <title>The complete genome sequence of Cupriavidus metallidurans strain CH34, a master survivalist in harsh and anthropogenic environments.</title>
        <authorList>
            <person name="Janssen P.J."/>
            <person name="Van Houdt R."/>
            <person name="Moors H."/>
            <person name="Monsieurs P."/>
            <person name="Morin N."/>
            <person name="Michaux A."/>
            <person name="Benotmane M.A."/>
            <person name="Leys N."/>
            <person name="Vallaeys T."/>
            <person name="Lapidus A."/>
            <person name="Monchy S."/>
            <person name="Medigue C."/>
            <person name="Taghavi S."/>
            <person name="McCorkle S."/>
            <person name="Dunn J."/>
            <person name="van der Lelie D."/>
            <person name="Mergeay M."/>
        </authorList>
    </citation>
    <scope>NUCLEOTIDE SEQUENCE [LARGE SCALE GENOMIC DNA]</scope>
    <source>
        <strain>ATCC 43123 / DSM 2839 / NBRC 102507 / CH34</strain>
    </source>
</reference>
<accession>Q1LNS3</accession>
<feature type="chain" id="PRO_0000387714" description="Acetaldehyde dehydrogenase 1">
    <location>
        <begin position="1"/>
        <end position="303"/>
    </location>
</feature>
<feature type="active site" description="Acyl-thioester intermediate" evidence="1">
    <location>
        <position position="130"/>
    </location>
</feature>
<feature type="binding site" evidence="1">
    <location>
        <begin position="161"/>
        <end position="169"/>
    </location>
    <ligand>
        <name>NAD(+)</name>
        <dbReference type="ChEBI" id="CHEBI:57540"/>
    </ligand>
</feature>
<feature type="binding site" evidence="1">
    <location>
        <position position="272"/>
    </location>
    <ligand>
        <name>NAD(+)</name>
        <dbReference type="ChEBI" id="CHEBI:57540"/>
    </ligand>
</feature>
<name>ACDH1_CUPMC</name>
<comment type="catalytic activity">
    <reaction evidence="1">
        <text>acetaldehyde + NAD(+) + CoA = acetyl-CoA + NADH + H(+)</text>
        <dbReference type="Rhea" id="RHEA:23288"/>
        <dbReference type="ChEBI" id="CHEBI:15343"/>
        <dbReference type="ChEBI" id="CHEBI:15378"/>
        <dbReference type="ChEBI" id="CHEBI:57287"/>
        <dbReference type="ChEBI" id="CHEBI:57288"/>
        <dbReference type="ChEBI" id="CHEBI:57540"/>
        <dbReference type="ChEBI" id="CHEBI:57945"/>
        <dbReference type="EC" id="1.2.1.10"/>
    </reaction>
</comment>
<comment type="similarity">
    <text evidence="1">Belongs to the acetaldehyde dehydrogenase family.</text>
</comment>
<sequence length="303" mass="32332">MKKIKCALIGPGNIGTDLLAKLKRSSVLEPVWMVGIDPESEGLNRARELGIKTTAEGVDGLLPHVLADGVQIAFDATSAYVHAENARKLNALGVMMIDLTPAAIGPYCVPPVNLKEHLGKREMNVNMVTCGGQATIPMVAAVSRVQPVAYGEIVATVSSRSVGPGTRKNIDEFTRTTAGAVEKVGGARKGKAIIIINPAEPPLMMRDTIHCLTETEPDQQRIAESIHAMIEEVQKYVPGYRLVNGPVFDGKRVTVFMEVAGLGDYLPTYAGNLDIMTAAAARTAEMFAEEMIAGNLTLEPVVA</sequence>
<organism>
    <name type="scientific">Cupriavidus metallidurans (strain ATCC 43123 / DSM 2839 / NBRC 102507 / CH34)</name>
    <name type="common">Ralstonia metallidurans</name>
    <dbReference type="NCBI Taxonomy" id="266264"/>
    <lineage>
        <taxon>Bacteria</taxon>
        <taxon>Pseudomonadati</taxon>
        <taxon>Pseudomonadota</taxon>
        <taxon>Betaproteobacteria</taxon>
        <taxon>Burkholderiales</taxon>
        <taxon>Burkholderiaceae</taxon>
        <taxon>Cupriavidus</taxon>
    </lineage>
</organism>
<evidence type="ECO:0000255" key="1">
    <source>
        <dbReference type="HAMAP-Rule" id="MF_01657"/>
    </source>
</evidence>
<keyword id="KW-0058">Aromatic hydrocarbons catabolism</keyword>
<keyword id="KW-0520">NAD</keyword>
<keyword id="KW-0560">Oxidoreductase</keyword>
<keyword id="KW-1185">Reference proteome</keyword>
<proteinExistence type="inferred from homology"/>
<protein>
    <recommendedName>
        <fullName evidence="1">Acetaldehyde dehydrogenase 1</fullName>
        <ecNumber evidence="1">1.2.1.10</ecNumber>
    </recommendedName>
    <alternativeName>
        <fullName evidence="1">Acetaldehyde dehydrogenase [acetylating] 1</fullName>
    </alternativeName>
</protein>
<dbReference type="EC" id="1.2.1.10" evidence="1"/>
<dbReference type="EMBL" id="CP000352">
    <property type="protein sequence ID" value="ABF08203.1"/>
    <property type="molecule type" value="Genomic_DNA"/>
</dbReference>
<dbReference type="RefSeq" id="WP_011516086.1">
    <property type="nucleotide sequence ID" value="NC_007973.1"/>
</dbReference>
<dbReference type="SMR" id="Q1LNS3"/>
<dbReference type="STRING" id="266264.Rmet_1320"/>
<dbReference type="KEGG" id="rme:Rmet_1320"/>
<dbReference type="eggNOG" id="COG4569">
    <property type="taxonomic scope" value="Bacteria"/>
</dbReference>
<dbReference type="HOGENOM" id="CLU_062208_0_0_4"/>
<dbReference type="Proteomes" id="UP000002429">
    <property type="component" value="Chromosome"/>
</dbReference>
<dbReference type="GO" id="GO:0008774">
    <property type="term" value="F:acetaldehyde dehydrogenase (acetylating) activity"/>
    <property type="evidence" value="ECO:0007669"/>
    <property type="project" value="UniProtKB-UniRule"/>
</dbReference>
<dbReference type="GO" id="GO:0051287">
    <property type="term" value="F:NAD binding"/>
    <property type="evidence" value="ECO:0007669"/>
    <property type="project" value="UniProtKB-UniRule"/>
</dbReference>
<dbReference type="GO" id="GO:0009056">
    <property type="term" value="P:catabolic process"/>
    <property type="evidence" value="ECO:0007669"/>
    <property type="project" value="UniProtKB-KW"/>
</dbReference>
<dbReference type="CDD" id="cd23933">
    <property type="entry name" value="ALDH_C"/>
    <property type="match status" value="1"/>
</dbReference>
<dbReference type="Gene3D" id="3.30.360.10">
    <property type="entry name" value="Dihydrodipicolinate Reductase, domain 2"/>
    <property type="match status" value="1"/>
</dbReference>
<dbReference type="Gene3D" id="3.40.50.720">
    <property type="entry name" value="NAD(P)-binding Rossmann-like Domain"/>
    <property type="match status" value="1"/>
</dbReference>
<dbReference type="HAMAP" id="MF_01657">
    <property type="entry name" value="Ac_ald_DH_ac"/>
    <property type="match status" value="1"/>
</dbReference>
<dbReference type="InterPro" id="IPR003361">
    <property type="entry name" value="Acetaldehyde_dehydrogenase"/>
</dbReference>
<dbReference type="InterPro" id="IPR015426">
    <property type="entry name" value="Acetylaldehyde_DH_C"/>
</dbReference>
<dbReference type="InterPro" id="IPR036291">
    <property type="entry name" value="NAD(P)-bd_dom_sf"/>
</dbReference>
<dbReference type="InterPro" id="IPR000534">
    <property type="entry name" value="Semialdehyde_DH_NAD-bd"/>
</dbReference>
<dbReference type="NCBIfam" id="TIGR03215">
    <property type="entry name" value="ac_ald_DH_ac"/>
    <property type="match status" value="1"/>
</dbReference>
<dbReference type="NCBIfam" id="NF006157">
    <property type="entry name" value="PRK08300.1"/>
    <property type="match status" value="1"/>
</dbReference>
<dbReference type="Pfam" id="PF09290">
    <property type="entry name" value="AcetDehyd-dimer"/>
    <property type="match status" value="1"/>
</dbReference>
<dbReference type="PIRSF" id="PIRSF015689">
    <property type="entry name" value="Actaldh_dh_actl"/>
    <property type="match status" value="1"/>
</dbReference>
<dbReference type="SMART" id="SM00859">
    <property type="entry name" value="Semialdhyde_dh"/>
    <property type="match status" value="1"/>
</dbReference>
<dbReference type="SUPFAM" id="SSF55347">
    <property type="entry name" value="Glyceraldehyde-3-phosphate dehydrogenase-like, C-terminal domain"/>
    <property type="match status" value="1"/>
</dbReference>
<dbReference type="SUPFAM" id="SSF51735">
    <property type="entry name" value="NAD(P)-binding Rossmann-fold domains"/>
    <property type="match status" value="1"/>
</dbReference>
<gene>
    <name type="ordered locus">Rmet_1320</name>
</gene>